<accession>Q8N1L1</accession>
<protein>
    <recommendedName>
        <fullName>Putative uncharacterized protein encoded by LINC00528</fullName>
    </recommendedName>
</protein>
<proteinExistence type="uncertain"/>
<dbReference type="EMBL" id="AK097861">
    <property type="protein sequence ID" value="BAC05187.1"/>
    <property type="molecule type" value="mRNA"/>
</dbReference>
<dbReference type="BioMuta" id="HGNC:26875"/>
<dbReference type="DMDM" id="74728541"/>
<dbReference type="PeptideAtlas" id="Q8N1L1"/>
<dbReference type="AGR" id="HGNC:26875"/>
<dbReference type="GeneCards" id="LINC00528"/>
<dbReference type="HGNC" id="HGNC:26875">
    <property type="gene designation" value="LINC00528"/>
</dbReference>
<dbReference type="neXtProt" id="NX_Q8N1L1"/>
<dbReference type="InParanoid" id="Q8N1L1"/>
<dbReference type="PAN-GO" id="Q8N1L1">
    <property type="GO annotations" value="0 GO annotations based on evolutionary models"/>
</dbReference>
<dbReference type="Pharos" id="Q8N1L1">
    <property type="development level" value="Tdark"/>
</dbReference>
<dbReference type="PRO" id="PR:Q8N1L1"/>
<dbReference type="Proteomes" id="UP000005640">
    <property type="component" value="Unplaced"/>
</dbReference>
<dbReference type="RNAct" id="Q8N1L1">
    <property type="molecule type" value="protein"/>
</dbReference>
<evidence type="ECO:0000305" key="1"/>
<organism>
    <name type="scientific">Homo sapiens</name>
    <name type="common">Human</name>
    <dbReference type="NCBI Taxonomy" id="9606"/>
    <lineage>
        <taxon>Eukaryota</taxon>
        <taxon>Metazoa</taxon>
        <taxon>Chordata</taxon>
        <taxon>Craniata</taxon>
        <taxon>Vertebrata</taxon>
        <taxon>Euteleostomi</taxon>
        <taxon>Mammalia</taxon>
        <taxon>Eutheria</taxon>
        <taxon>Euarchontoglires</taxon>
        <taxon>Primates</taxon>
        <taxon>Haplorrhini</taxon>
        <taxon>Catarrhini</taxon>
        <taxon>Hominidae</taxon>
        <taxon>Homo</taxon>
    </lineage>
</organism>
<reference key="1">
    <citation type="journal article" date="2004" name="Nat. Genet.">
        <title>Complete sequencing and characterization of 21,243 full-length human cDNAs.</title>
        <authorList>
            <person name="Ota T."/>
            <person name="Suzuki Y."/>
            <person name="Nishikawa T."/>
            <person name="Otsuki T."/>
            <person name="Sugiyama T."/>
            <person name="Irie R."/>
            <person name="Wakamatsu A."/>
            <person name="Hayashi K."/>
            <person name="Sato H."/>
            <person name="Nagai K."/>
            <person name="Kimura K."/>
            <person name="Makita H."/>
            <person name="Sekine M."/>
            <person name="Obayashi M."/>
            <person name="Nishi T."/>
            <person name="Shibahara T."/>
            <person name="Tanaka T."/>
            <person name="Ishii S."/>
            <person name="Yamamoto J."/>
            <person name="Saito K."/>
            <person name="Kawai Y."/>
            <person name="Isono Y."/>
            <person name="Nakamura Y."/>
            <person name="Nagahari K."/>
            <person name="Murakami K."/>
            <person name="Yasuda T."/>
            <person name="Iwayanagi T."/>
            <person name="Wagatsuma M."/>
            <person name="Shiratori A."/>
            <person name="Sudo H."/>
            <person name="Hosoiri T."/>
            <person name="Kaku Y."/>
            <person name="Kodaira H."/>
            <person name="Kondo H."/>
            <person name="Sugawara M."/>
            <person name="Takahashi M."/>
            <person name="Kanda K."/>
            <person name="Yokoi T."/>
            <person name="Furuya T."/>
            <person name="Kikkawa E."/>
            <person name="Omura Y."/>
            <person name="Abe K."/>
            <person name="Kamihara K."/>
            <person name="Katsuta N."/>
            <person name="Sato K."/>
            <person name="Tanikawa M."/>
            <person name="Yamazaki M."/>
            <person name="Ninomiya K."/>
            <person name="Ishibashi T."/>
            <person name="Yamashita H."/>
            <person name="Murakawa K."/>
            <person name="Fujimori K."/>
            <person name="Tanai H."/>
            <person name="Kimata M."/>
            <person name="Watanabe M."/>
            <person name="Hiraoka S."/>
            <person name="Chiba Y."/>
            <person name="Ishida S."/>
            <person name="Ono Y."/>
            <person name="Takiguchi S."/>
            <person name="Watanabe S."/>
            <person name="Yosida M."/>
            <person name="Hotuta T."/>
            <person name="Kusano J."/>
            <person name="Kanehori K."/>
            <person name="Takahashi-Fujii A."/>
            <person name="Hara H."/>
            <person name="Tanase T.-O."/>
            <person name="Nomura Y."/>
            <person name="Togiya S."/>
            <person name="Komai F."/>
            <person name="Hara R."/>
            <person name="Takeuchi K."/>
            <person name="Arita M."/>
            <person name="Imose N."/>
            <person name="Musashino K."/>
            <person name="Yuuki H."/>
            <person name="Oshima A."/>
            <person name="Sasaki N."/>
            <person name="Aotsuka S."/>
            <person name="Yoshikawa Y."/>
            <person name="Matsunawa H."/>
            <person name="Ichihara T."/>
            <person name="Shiohata N."/>
            <person name="Sano S."/>
            <person name="Moriya S."/>
            <person name="Momiyama H."/>
            <person name="Satoh N."/>
            <person name="Takami S."/>
            <person name="Terashima Y."/>
            <person name="Suzuki O."/>
            <person name="Nakagawa S."/>
            <person name="Senoh A."/>
            <person name="Mizoguchi H."/>
            <person name="Goto Y."/>
            <person name="Shimizu F."/>
            <person name="Wakebe H."/>
            <person name="Hishigaki H."/>
            <person name="Watanabe T."/>
            <person name="Sugiyama A."/>
            <person name="Takemoto M."/>
            <person name="Kawakami B."/>
            <person name="Yamazaki M."/>
            <person name="Watanabe K."/>
            <person name="Kumagai A."/>
            <person name="Itakura S."/>
            <person name="Fukuzumi Y."/>
            <person name="Fujimori Y."/>
            <person name="Komiyama M."/>
            <person name="Tashiro H."/>
            <person name="Tanigami A."/>
            <person name="Fujiwara T."/>
            <person name="Ono T."/>
            <person name="Yamada K."/>
            <person name="Fujii Y."/>
            <person name="Ozaki K."/>
            <person name="Hirao M."/>
            <person name="Ohmori Y."/>
            <person name="Kawabata A."/>
            <person name="Hikiji T."/>
            <person name="Kobatake N."/>
            <person name="Inagaki H."/>
            <person name="Ikema Y."/>
            <person name="Okamoto S."/>
            <person name="Okitani R."/>
            <person name="Kawakami T."/>
            <person name="Noguchi S."/>
            <person name="Itoh T."/>
            <person name="Shigeta K."/>
            <person name="Senba T."/>
            <person name="Matsumura K."/>
            <person name="Nakajima Y."/>
            <person name="Mizuno T."/>
            <person name="Morinaga M."/>
            <person name="Sasaki M."/>
            <person name="Togashi T."/>
            <person name="Oyama M."/>
            <person name="Hata H."/>
            <person name="Watanabe M."/>
            <person name="Komatsu T."/>
            <person name="Mizushima-Sugano J."/>
            <person name="Satoh T."/>
            <person name="Shirai Y."/>
            <person name="Takahashi Y."/>
            <person name="Nakagawa K."/>
            <person name="Okumura K."/>
            <person name="Nagase T."/>
            <person name="Nomura N."/>
            <person name="Kikuchi H."/>
            <person name="Masuho Y."/>
            <person name="Yamashita R."/>
            <person name="Nakai K."/>
            <person name="Yada T."/>
            <person name="Nakamura Y."/>
            <person name="Ohara O."/>
            <person name="Isogai T."/>
            <person name="Sugano S."/>
        </authorList>
    </citation>
    <scope>NUCLEOTIDE SEQUENCE [LARGE SCALE MRNA]</scope>
    <source>
        <tissue>Thymus</tissue>
    </source>
</reference>
<comment type="caution">
    <text evidence="1">Product of a dubious CDS prediction. May be a non-coding RNA.</text>
</comment>
<feature type="chain" id="PRO_0000254135" description="Putative uncharacterized protein encoded by LINC00528">
    <location>
        <begin position="1"/>
        <end position="170"/>
    </location>
</feature>
<sequence>MALLLSDWCPDGDADTHTGTDPGRTTHRLCARERGVRGTQPCPRIYLRLPAQNCEETRFCCASPGSVVLGHGAPRTASPPSALSHPSPLEGLSFSPFPPSVLSHPSPPEGLSFSLFHCLCSGKLSESPGCFWNSLGWSFSVLTEPGVWKVGEAIWVAENLAQPLTSPCAC</sequence>
<keyword id="KW-1185">Reference proteome</keyword>
<name>CV037_HUMAN</name>
<gene>
    <name type="primary">LINC00528</name>
    <name type="synonym">C22orf37</name>
</gene>